<organism>
    <name type="scientific">Rattus norvegicus</name>
    <name type="common">Rat</name>
    <dbReference type="NCBI Taxonomy" id="10116"/>
    <lineage>
        <taxon>Eukaryota</taxon>
        <taxon>Metazoa</taxon>
        <taxon>Chordata</taxon>
        <taxon>Craniata</taxon>
        <taxon>Vertebrata</taxon>
        <taxon>Euteleostomi</taxon>
        <taxon>Mammalia</taxon>
        <taxon>Eutheria</taxon>
        <taxon>Euarchontoglires</taxon>
        <taxon>Glires</taxon>
        <taxon>Rodentia</taxon>
        <taxon>Myomorpha</taxon>
        <taxon>Muroidea</taxon>
        <taxon>Muridae</taxon>
        <taxon>Murinae</taxon>
        <taxon>Rattus</taxon>
    </lineage>
</organism>
<reference key="1">
    <citation type="journal article" date="2000" name="J. Pharmacol. Exp. Ther.">
        <title>Cloning of rat histamine H3 receptor reveals distinct species pharmacological profiles.</title>
        <authorList>
            <person name="Lovenberg T.W."/>
            <person name="Pyati J."/>
            <person name="Chang H."/>
            <person name="Wilson S.J."/>
            <person name="Erlander M.G."/>
        </authorList>
    </citation>
    <scope>NUCLEOTIDE SEQUENCE [MRNA] (ISOFORM 1)</scope>
    <source>
        <tissue>Hypothalamus</tissue>
    </source>
</reference>
<reference key="2">
    <citation type="journal article" date="2000" name="Nature">
        <title>High constitutive activity of native H3 receptors regulates histamine neurons in brain.</title>
        <authorList>
            <person name="Morisset S."/>
            <person name="Rouleau A."/>
            <person name="Ligneau X."/>
            <person name="Gbahou F."/>
            <person name="Tardivel-Lacombe J."/>
            <person name="Stark H."/>
            <person name="Schunack W."/>
            <person name="Ganellin C.R."/>
            <person name="Schwartz J.-C."/>
            <person name="Arrang J.-M."/>
        </authorList>
    </citation>
    <scope>NUCLEOTIDE SEQUENCE [MRNA] (ISOFORMS 1 AND 2)</scope>
    <source>
        <tissue>Corpus striatum</tissue>
    </source>
</reference>
<reference key="3">
    <citation type="submission" date="1998-06" db="EMBL/GenBank/DDBJ databases">
        <title>Cloning of a novel G protein-coupled receptor.</title>
        <authorList>
            <person name="Itadani H."/>
            <person name="Takimura T."/>
            <person name="Nakamura T."/>
            <person name="Ohta M."/>
        </authorList>
    </citation>
    <scope>NUCLEOTIDE SEQUENCE [MRNA] (ISOFORMS 1; 2; 3 AND 4)</scope>
</reference>
<reference key="4">
    <citation type="journal article" date="1999" name="Mol. Pharmacol.">
        <title>Cloning and functional expression of the human histamine H3 receptor.</title>
        <authorList>
            <person name="Lovenberg T.W."/>
            <person name="Roland B.L."/>
            <person name="Wilson S.J."/>
            <person name="Jiang X."/>
            <person name="Pyati J."/>
            <person name="Huvar A."/>
            <person name="Jackson M.R."/>
            <person name="Erlander M.G."/>
        </authorList>
    </citation>
    <scope>TISSUE SPECIFICITY</scope>
</reference>
<proteinExistence type="evidence at transcript level"/>
<dbReference type="EMBL" id="AF237919">
    <property type="protein sequence ID" value="AAF82086.1"/>
    <property type="molecule type" value="mRNA"/>
</dbReference>
<dbReference type="EMBL" id="AY009370">
    <property type="protein sequence ID" value="AAK02069.1"/>
    <property type="molecule type" value="mRNA"/>
</dbReference>
<dbReference type="EMBL" id="AB015646">
    <property type="protein sequence ID" value="BAA88765.1"/>
    <property type="molecule type" value="mRNA"/>
</dbReference>
<dbReference type="EMBL" id="AB015646">
    <property type="protein sequence ID" value="BAA88766.1"/>
    <property type="molecule type" value="mRNA"/>
</dbReference>
<dbReference type="EMBL" id="AB015646">
    <property type="protein sequence ID" value="BAA88767.1"/>
    <property type="molecule type" value="mRNA"/>
</dbReference>
<dbReference type="EMBL" id="AB015646">
    <property type="protein sequence ID" value="BAA88768.1"/>
    <property type="molecule type" value="mRNA"/>
</dbReference>
<dbReference type="RefSeq" id="NP_001257493.1">
    <molecule id="Q9QYN8-2"/>
    <property type="nucleotide sequence ID" value="NM_001270564.1"/>
</dbReference>
<dbReference type="RefSeq" id="NP_001257494.1">
    <molecule id="Q9QYN8-3"/>
    <property type="nucleotide sequence ID" value="NM_001270565.1"/>
</dbReference>
<dbReference type="RefSeq" id="NP_001257497.1">
    <molecule id="Q9QYN8-4"/>
    <property type="nucleotide sequence ID" value="NM_001270568.1"/>
</dbReference>
<dbReference type="RefSeq" id="NP_445958.1">
    <molecule id="Q9QYN8-1"/>
    <property type="nucleotide sequence ID" value="NM_053506.2"/>
</dbReference>
<dbReference type="SMR" id="Q9QYN8"/>
<dbReference type="BioGRID" id="250072">
    <property type="interactions" value="1"/>
</dbReference>
<dbReference type="CORUM" id="Q9QYN8"/>
<dbReference type="FunCoup" id="Q9QYN8">
    <property type="interactions" value="142"/>
</dbReference>
<dbReference type="STRING" id="10116.ENSRNOP00000069003"/>
<dbReference type="BindingDB" id="Q9QYN8"/>
<dbReference type="ChEMBL" id="CHEMBL4124"/>
<dbReference type="DrugCentral" id="Q9QYN8"/>
<dbReference type="GuidetoPHARMACOLOGY" id="264"/>
<dbReference type="GlyCosmos" id="Q9QYN8">
    <property type="glycosylation" value="1 site, No reported glycans"/>
</dbReference>
<dbReference type="GlyGen" id="Q9QYN8">
    <property type="glycosylation" value="2 sites"/>
</dbReference>
<dbReference type="PhosphoSitePlus" id="Q9QYN8"/>
<dbReference type="Ensembl" id="ENSRNOT00000086761.2">
    <molecule id="Q9QYN8-1"/>
    <property type="protein sequence ID" value="ENSRNOP00000069003.2"/>
    <property type="gene ID" value="ENSRNOG00000061153.2"/>
</dbReference>
<dbReference type="Ensembl" id="ENSRNOT00000116829.1">
    <molecule id="Q9QYN8-2"/>
    <property type="protein sequence ID" value="ENSRNOP00000090011.1"/>
    <property type="gene ID" value="ENSRNOG00000061153.2"/>
</dbReference>
<dbReference type="GeneID" id="85268"/>
<dbReference type="KEGG" id="rno:85268"/>
<dbReference type="AGR" id="RGD:620630"/>
<dbReference type="CTD" id="11255"/>
<dbReference type="RGD" id="620630">
    <property type="gene designation" value="Hrh3"/>
</dbReference>
<dbReference type="GeneTree" id="ENSGT00940000161502"/>
<dbReference type="InParanoid" id="Q9QYN8"/>
<dbReference type="OMA" id="CWEWEQK"/>
<dbReference type="OrthoDB" id="10071887at2759"/>
<dbReference type="PhylomeDB" id="Q9QYN8"/>
<dbReference type="Reactome" id="R-RNO-390650">
    <property type="pathway name" value="Histamine receptors"/>
</dbReference>
<dbReference type="PRO" id="PR:Q9QYN8"/>
<dbReference type="Proteomes" id="UP000002494">
    <property type="component" value="Chromosome 3"/>
</dbReference>
<dbReference type="GO" id="GO:0030425">
    <property type="term" value="C:dendrite"/>
    <property type="evidence" value="ECO:0000318"/>
    <property type="project" value="GO_Central"/>
</dbReference>
<dbReference type="GO" id="GO:0005886">
    <property type="term" value="C:plasma membrane"/>
    <property type="evidence" value="ECO:0000318"/>
    <property type="project" value="GO_Central"/>
</dbReference>
<dbReference type="GO" id="GO:0045202">
    <property type="term" value="C:synapse"/>
    <property type="evidence" value="ECO:0000318"/>
    <property type="project" value="GO_Central"/>
</dbReference>
<dbReference type="GO" id="GO:0043176">
    <property type="term" value="F:amine binding"/>
    <property type="evidence" value="ECO:0000353"/>
    <property type="project" value="RGD"/>
</dbReference>
<dbReference type="GO" id="GO:1901363">
    <property type="term" value="F:heterocyclic compound binding"/>
    <property type="evidence" value="ECO:0000353"/>
    <property type="project" value="RGD"/>
</dbReference>
<dbReference type="GO" id="GO:0004969">
    <property type="term" value="F:histamine receptor activity"/>
    <property type="evidence" value="ECO:0000318"/>
    <property type="project" value="GO_Central"/>
</dbReference>
<dbReference type="GO" id="GO:0030594">
    <property type="term" value="F:neurotransmitter receptor activity"/>
    <property type="evidence" value="ECO:0000318"/>
    <property type="project" value="GO_Central"/>
</dbReference>
<dbReference type="GO" id="GO:0007197">
    <property type="term" value="P:adenylate cyclase-inhibiting G protein-coupled acetylcholine receptor signaling pathway"/>
    <property type="evidence" value="ECO:0000318"/>
    <property type="project" value="GO_Central"/>
</dbReference>
<dbReference type="GO" id="GO:0046058">
    <property type="term" value="P:cAMP metabolic process"/>
    <property type="evidence" value="ECO:0000314"/>
    <property type="project" value="RGD"/>
</dbReference>
<dbReference type="GO" id="GO:0007268">
    <property type="term" value="P:chemical synaptic transmission"/>
    <property type="evidence" value="ECO:0000318"/>
    <property type="project" value="GO_Central"/>
</dbReference>
<dbReference type="GO" id="GO:0050890">
    <property type="term" value="P:cognition"/>
    <property type="evidence" value="ECO:0000315"/>
    <property type="project" value="RGD"/>
</dbReference>
<dbReference type="GO" id="GO:0042756">
    <property type="term" value="P:drinking behavior"/>
    <property type="evidence" value="ECO:0000315"/>
    <property type="project" value="RGD"/>
</dbReference>
<dbReference type="GO" id="GO:0042755">
    <property type="term" value="P:eating behavior"/>
    <property type="evidence" value="ECO:0000315"/>
    <property type="project" value="RGD"/>
</dbReference>
<dbReference type="GO" id="GO:0007187">
    <property type="term" value="P:G protein-coupled receptor signaling pathway, coupled to cyclic nucleotide second messenger"/>
    <property type="evidence" value="ECO:0000318"/>
    <property type="project" value="GO_Central"/>
</dbReference>
<dbReference type="GO" id="GO:0007612">
    <property type="term" value="P:learning"/>
    <property type="evidence" value="ECO:0000315"/>
    <property type="project" value="RGD"/>
</dbReference>
<dbReference type="GO" id="GO:0007613">
    <property type="term" value="P:memory"/>
    <property type="evidence" value="ECO:0000315"/>
    <property type="project" value="RGD"/>
</dbReference>
<dbReference type="GO" id="GO:0045776">
    <property type="term" value="P:negative regulation of blood pressure"/>
    <property type="evidence" value="ECO:0000315"/>
    <property type="project" value="RGD"/>
</dbReference>
<dbReference type="GO" id="GO:0014053">
    <property type="term" value="P:negative regulation of gamma-aminobutyric acid secretion"/>
    <property type="evidence" value="ECO:0000315"/>
    <property type="project" value="RGD"/>
</dbReference>
<dbReference type="GO" id="GO:0014050">
    <property type="term" value="P:negative regulation of glutamate secretion"/>
    <property type="evidence" value="ECO:0000315"/>
    <property type="project" value="RGD"/>
</dbReference>
<dbReference type="GO" id="GO:0014063">
    <property type="term" value="P:negative regulation of serotonin secretion"/>
    <property type="evidence" value="ECO:0000315"/>
    <property type="project" value="RGD"/>
</dbReference>
<dbReference type="GO" id="GO:0090238">
    <property type="term" value="P:positive regulation of arachidonate secretion"/>
    <property type="evidence" value="ECO:0000314"/>
    <property type="project" value="RGD"/>
</dbReference>
<dbReference type="GO" id="GO:0007204">
    <property type="term" value="P:positive regulation of cytosolic calcium ion concentration"/>
    <property type="evidence" value="ECO:0000315"/>
    <property type="project" value="RGD"/>
</dbReference>
<dbReference type="GO" id="GO:0050679">
    <property type="term" value="P:positive regulation of epithelial cell proliferation"/>
    <property type="evidence" value="ECO:0000315"/>
    <property type="project" value="RGD"/>
</dbReference>
<dbReference type="GO" id="GO:0014061">
    <property type="term" value="P:regulation of norepinephrine secretion"/>
    <property type="evidence" value="ECO:0000315"/>
    <property type="project" value="RGD"/>
</dbReference>
<dbReference type="GO" id="GO:1904321">
    <property type="term" value="P:response to forskolin"/>
    <property type="evidence" value="ECO:0000314"/>
    <property type="project" value="RGD"/>
</dbReference>
<dbReference type="CDD" id="cd15296">
    <property type="entry name" value="7tmA_Histamine_H3R"/>
    <property type="match status" value="1"/>
</dbReference>
<dbReference type="FunFam" id="1.20.1070.10:FF:000138">
    <property type="entry name" value="histamine H3 receptor"/>
    <property type="match status" value="1"/>
</dbReference>
<dbReference type="Gene3D" id="1.20.1070.10">
    <property type="entry name" value="Rhodopsin 7-helix transmembrane proteins"/>
    <property type="match status" value="1"/>
</dbReference>
<dbReference type="InterPro" id="IPR041998">
    <property type="entry name" value="7tmA_HRH3"/>
</dbReference>
<dbReference type="InterPro" id="IPR000276">
    <property type="entry name" value="GPCR_Rhodpsn"/>
</dbReference>
<dbReference type="InterPro" id="IPR017452">
    <property type="entry name" value="GPCR_Rhodpsn_7TM"/>
</dbReference>
<dbReference type="InterPro" id="IPR003980">
    <property type="entry name" value="Histamine_H3_rcpt"/>
</dbReference>
<dbReference type="PANTHER" id="PTHR24247">
    <property type="entry name" value="5-HYDROXYTRYPTAMINE RECEPTOR"/>
    <property type="match status" value="1"/>
</dbReference>
<dbReference type="PANTHER" id="PTHR24247:SF194">
    <property type="entry name" value="HISTAMINE H3 RECEPTOR"/>
    <property type="match status" value="1"/>
</dbReference>
<dbReference type="Pfam" id="PF00001">
    <property type="entry name" value="7tm_1"/>
    <property type="match status" value="1"/>
</dbReference>
<dbReference type="PRINTS" id="PR00237">
    <property type="entry name" value="GPCRRHODOPSN"/>
</dbReference>
<dbReference type="PRINTS" id="PR01471">
    <property type="entry name" value="HISTAMINEH3R"/>
</dbReference>
<dbReference type="SMART" id="SM01381">
    <property type="entry name" value="7TM_GPCR_Srsx"/>
    <property type="match status" value="1"/>
</dbReference>
<dbReference type="SUPFAM" id="SSF81321">
    <property type="entry name" value="Family A G protein-coupled receptor-like"/>
    <property type="match status" value="1"/>
</dbReference>
<dbReference type="PROSITE" id="PS00237">
    <property type="entry name" value="G_PROTEIN_RECEP_F1_1"/>
    <property type="match status" value="1"/>
</dbReference>
<dbReference type="PROSITE" id="PS50262">
    <property type="entry name" value="G_PROTEIN_RECEP_F1_2"/>
    <property type="match status" value="1"/>
</dbReference>
<feature type="chain" id="PRO_0000069692" description="Histamine H3 receptor">
    <location>
        <begin position="1"/>
        <end position="445"/>
    </location>
</feature>
<feature type="topological domain" description="Extracellular" evidence="2">
    <location>
        <begin position="1"/>
        <end position="39"/>
    </location>
</feature>
<feature type="transmembrane region" description="Helical; Name=1" evidence="2">
    <location>
        <begin position="40"/>
        <end position="60"/>
    </location>
</feature>
<feature type="topological domain" description="Cytoplasmic" evidence="2">
    <location>
        <begin position="61"/>
        <end position="70"/>
    </location>
</feature>
<feature type="transmembrane region" description="Helical; Name=2" evidence="2">
    <location>
        <begin position="71"/>
        <end position="91"/>
    </location>
</feature>
<feature type="topological domain" description="Extracellular" evidence="2">
    <location>
        <begin position="92"/>
        <end position="108"/>
    </location>
</feature>
<feature type="transmembrane region" description="Helical; Name=3" evidence="2">
    <location>
        <begin position="109"/>
        <end position="129"/>
    </location>
</feature>
<feature type="topological domain" description="Cytoplasmic" evidence="2">
    <location>
        <begin position="130"/>
        <end position="156"/>
    </location>
</feature>
<feature type="transmembrane region" description="Helical; Name=4" evidence="2">
    <location>
        <begin position="157"/>
        <end position="177"/>
    </location>
</feature>
<feature type="topological domain" description="Extracellular" evidence="2">
    <location>
        <begin position="178"/>
        <end position="196"/>
    </location>
</feature>
<feature type="transmembrane region" description="Helical; Name=5" evidence="2">
    <location>
        <begin position="197"/>
        <end position="217"/>
    </location>
</feature>
<feature type="topological domain" description="Cytoplasmic" evidence="2">
    <location>
        <begin position="218"/>
        <end position="359"/>
    </location>
</feature>
<feature type="transmembrane region" description="Helical; Name=6" evidence="2">
    <location>
        <begin position="360"/>
        <end position="380"/>
    </location>
</feature>
<feature type="topological domain" description="Extracellular" evidence="2">
    <location>
        <begin position="381"/>
        <end position="396"/>
    </location>
</feature>
<feature type="transmembrane region" description="Helical; Name=7" evidence="2">
    <location>
        <begin position="397"/>
        <end position="417"/>
    </location>
</feature>
<feature type="topological domain" description="Cytoplasmic" evidence="2">
    <location>
        <begin position="418"/>
        <end position="445"/>
    </location>
</feature>
<feature type="region of interest" description="Disordered" evidence="4">
    <location>
        <begin position="234"/>
        <end position="259"/>
    </location>
</feature>
<feature type="region of interest" description="Disordered" evidence="4">
    <location>
        <begin position="286"/>
        <end position="336"/>
    </location>
</feature>
<feature type="compositionally biased region" description="Pro residues" evidence="4">
    <location>
        <begin position="241"/>
        <end position="256"/>
    </location>
</feature>
<feature type="compositionally biased region" description="Gly residues" evidence="4">
    <location>
        <begin position="290"/>
        <end position="299"/>
    </location>
</feature>
<feature type="compositionally biased region" description="Low complexity" evidence="4">
    <location>
        <begin position="300"/>
        <end position="312"/>
    </location>
</feature>
<feature type="modified residue" description="Phosphoserine" evidence="1">
    <location>
        <position position="439"/>
    </location>
</feature>
<feature type="glycosylation site" description="N-linked (GlcNAc...) asparagine" evidence="2">
    <location>
        <position position="11"/>
    </location>
</feature>
<feature type="disulfide bond" evidence="3">
    <location>
        <begin position="107"/>
        <end position="188"/>
    </location>
</feature>
<feature type="splice variant" id="VSP_001888" description="In isoform 3 and isoform 4." evidence="7">
    <location>
        <begin position="274"/>
        <end position="321"/>
    </location>
</feature>
<feature type="splice variant" id="VSP_001887" description="In isoform 2." evidence="6 7">
    <location>
        <begin position="274"/>
        <end position="305"/>
    </location>
</feature>
<feature type="splice variant" id="VSP_001889" description="In isoform 4." evidence="7">
    <original>WYETSFWLLWANSAVNPVLYPLCHYSFRRAFTKLLCPQKLKVQPHGSLEQCWK</original>
    <variation>CVERLGKLEASLLLPLWMFSGRWRRRKHVCELDVPWMFNQERQNCRGARGWIGRCGLPRPPPSVLQLPAEPRQLLLPAPPPGLGRWPCPACPVCTIRIWGWVVMG</variation>
    <location>
        <begin position="393"/>
        <end position="445"/>
    </location>
</feature>
<name>HRH3_RAT</name>
<keyword id="KW-0025">Alternative splicing</keyword>
<keyword id="KW-1003">Cell membrane</keyword>
<keyword id="KW-1015">Disulfide bond</keyword>
<keyword id="KW-0297">G-protein coupled receptor</keyword>
<keyword id="KW-0325">Glycoprotein</keyword>
<keyword id="KW-0472">Membrane</keyword>
<keyword id="KW-0597">Phosphoprotein</keyword>
<keyword id="KW-0675">Receptor</keyword>
<keyword id="KW-1185">Reference proteome</keyword>
<keyword id="KW-0807">Transducer</keyword>
<keyword id="KW-0812">Transmembrane</keyword>
<keyword id="KW-1133">Transmembrane helix</keyword>
<protein>
    <recommendedName>
        <fullName>Histamine H3 receptor</fullName>
        <shortName>H3R</shortName>
        <shortName>HH3R</shortName>
    </recommendedName>
</protein>
<accession>Q9QYN8</accession>
<accession>Q9QYN6</accession>
<accession>Q9QYN7</accession>
<accession>Q9QYN9</accession>
<comment type="function">
    <text>The H3 subclass of histamine receptors could mediate the histamine signals in CNS and peripheral nervous system. Signals through the inhibition of adenylate cyclase and displays high constitutive activity (spontaneous activity in the absence of agonist).</text>
</comment>
<comment type="subcellular location">
    <subcellularLocation>
        <location>Cell membrane</location>
        <topology>Multi-pass membrane protein</topology>
    </subcellularLocation>
</comment>
<comment type="alternative products">
    <event type="alternative splicing"/>
    <isoform>
        <id>Q9QYN8-1</id>
        <name>1</name>
        <name>H3L</name>
        <sequence type="displayed"/>
    </isoform>
    <isoform>
        <id>Q9QYN8-2</id>
        <name>2</name>
        <name>H3S</name>
        <sequence type="described" ref="VSP_001887"/>
    </isoform>
    <isoform>
        <id>Q9QYN8-3</id>
        <name>3</name>
        <sequence type="described" ref="VSP_001888"/>
    </isoform>
    <isoform>
        <id>Q9QYN8-4</id>
        <name>4</name>
        <sequence type="described" ref="VSP_001888 VSP_001889"/>
    </isoform>
    <text>Additional isoforms seem to exist.</text>
</comment>
<comment type="tissue specificity">
    <text evidence="5">Expressed abundantly in brain, most notably throughout the thalamus, the ventromedial hypothalamus and the caudate nucleus. Isoform 1 is largely predominant in all tissues.</text>
</comment>
<comment type="miscellaneous">
    <text>Proxyfan acts as a potent neutral antagonist while thioperamide, ciproxifan and FUB465 act as potent inverse agonists.</text>
</comment>
<comment type="similarity">
    <text evidence="3">Belongs to the G-protein coupled receptor 1 family.</text>
</comment>
<sequence length="445" mass="48588">MERAPPDGLMNASGTLAGEAAAAGGARGFSAAWTAVLAALMALLIVATVLGNALVMLAFVADSSLRTQNNFFLLNLAISDFLVGAFCIPLYVPYVLTGRWTFGRGLCKLWLVVDYLLCASSVFNIVLISYDRFLSVTRAVSYRAQQGDTRRAVRKMALVWVLAFLLYGPAILSWEYLSGGSSIPEGHCYAEFFYNWYFLITASTLEFFTPFLSVTFFNLSIYLNIQRRTRLRLDGGREAGPEPPPDAQPSPPPAPPSCWGCWPKGHGEAMPLHRYGVGEAGPGVEAGEAALGGGSGGGAAASPTSSSGSSSRGTERPRSLKRGSKPSASSASLEKRMKMVSQSITQRFRLSRDKKVAKSLAIIVSIFGLCWAPYTLLMIIRAACHGRCIPDYWYETSFWLLWANSAVNPVLYPLCHYSFRRAFTKLLCPQKLKVQPHGSLEQCWK</sequence>
<evidence type="ECO:0000250" key="1">
    <source>
        <dbReference type="UniProtKB" id="P58406"/>
    </source>
</evidence>
<evidence type="ECO:0000255" key="2"/>
<evidence type="ECO:0000255" key="3">
    <source>
        <dbReference type="PROSITE-ProRule" id="PRU00521"/>
    </source>
</evidence>
<evidence type="ECO:0000256" key="4">
    <source>
        <dbReference type="SAM" id="MobiDB-lite"/>
    </source>
</evidence>
<evidence type="ECO:0000269" key="5">
    <source>
    </source>
</evidence>
<evidence type="ECO:0000303" key="6">
    <source>
    </source>
</evidence>
<evidence type="ECO:0000303" key="7">
    <source ref="3"/>
</evidence>
<gene>
    <name type="primary">Hrh3</name>
</gene>